<comment type="function">
    <text evidence="1">Associates with the EF-Tu.GDP complex and induces the exchange of GDP to GTP. It remains bound to the aminoacyl-tRNA.EF-Tu.GTP complex up to the GTP hydrolysis stage on the ribosome.</text>
</comment>
<comment type="subcellular location">
    <subcellularLocation>
        <location evidence="1">Cytoplasm</location>
    </subcellularLocation>
</comment>
<comment type="similarity">
    <text evidence="1">Belongs to the EF-Ts family.</text>
</comment>
<organism>
    <name type="scientific">Cupriavidus metallidurans (strain ATCC 43123 / DSM 2839 / NBRC 102507 / CH34)</name>
    <name type="common">Ralstonia metallidurans</name>
    <dbReference type="NCBI Taxonomy" id="266264"/>
    <lineage>
        <taxon>Bacteria</taxon>
        <taxon>Pseudomonadati</taxon>
        <taxon>Pseudomonadota</taxon>
        <taxon>Betaproteobacteria</taxon>
        <taxon>Burkholderiales</taxon>
        <taxon>Burkholderiaceae</taxon>
        <taxon>Cupriavidus</taxon>
    </lineage>
</organism>
<dbReference type="EMBL" id="CP000352">
    <property type="protein sequence ID" value="ABF08319.1"/>
    <property type="molecule type" value="Genomic_DNA"/>
</dbReference>
<dbReference type="RefSeq" id="WP_011516186.1">
    <property type="nucleotide sequence ID" value="NC_007973.1"/>
</dbReference>
<dbReference type="SMR" id="Q1LNF7"/>
<dbReference type="STRING" id="266264.Rmet_1436"/>
<dbReference type="KEGG" id="rme:Rmet_1436"/>
<dbReference type="eggNOG" id="COG0264">
    <property type="taxonomic scope" value="Bacteria"/>
</dbReference>
<dbReference type="HOGENOM" id="CLU_047155_0_2_4"/>
<dbReference type="Proteomes" id="UP000002429">
    <property type="component" value="Chromosome"/>
</dbReference>
<dbReference type="GO" id="GO:0005737">
    <property type="term" value="C:cytoplasm"/>
    <property type="evidence" value="ECO:0007669"/>
    <property type="project" value="UniProtKB-SubCell"/>
</dbReference>
<dbReference type="GO" id="GO:0003746">
    <property type="term" value="F:translation elongation factor activity"/>
    <property type="evidence" value="ECO:0007669"/>
    <property type="project" value="UniProtKB-UniRule"/>
</dbReference>
<dbReference type="CDD" id="cd14275">
    <property type="entry name" value="UBA_EF-Ts"/>
    <property type="match status" value="1"/>
</dbReference>
<dbReference type="FunFam" id="1.10.286.20:FF:000001">
    <property type="entry name" value="Elongation factor Ts"/>
    <property type="match status" value="1"/>
</dbReference>
<dbReference type="FunFam" id="1.10.8.10:FF:000001">
    <property type="entry name" value="Elongation factor Ts"/>
    <property type="match status" value="1"/>
</dbReference>
<dbReference type="Gene3D" id="1.10.286.20">
    <property type="match status" value="1"/>
</dbReference>
<dbReference type="Gene3D" id="1.10.8.10">
    <property type="entry name" value="DNA helicase RuvA subunit, C-terminal domain"/>
    <property type="match status" value="1"/>
</dbReference>
<dbReference type="Gene3D" id="3.30.479.20">
    <property type="entry name" value="Elongation factor Ts, dimerisation domain"/>
    <property type="match status" value="2"/>
</dbReference>
<dbReference type="HAMAP" id="MF_00050">
    <property type="entry name" value="EF_Ts"/>
    <property type="match status" value="1"/>
</dbReference>
<dbReference type="InterPro" id="IPR036402">
    <property type="entry name" value="EF-Ts_dimer_sf"/>
</dbReference>
<dbReference type="InterPro" id="IPR001816">
    <property type="entry name" value="Transl_elong_EFTs/EF1B"/>
</dbReference>
<dbReference type="InterPro" id="IPR014039">
    <property type="entry name" value="Transl_elong_EFTs/EF1B_dimer"/>
</dbReference>
<dbReference type="InterPro" id="IPR018101">
    <property type="entry name" value="Transl_elong_Ts_CS"/>
</dbReference>
<dbReference type="InterPro" id="IPR009060">
    <property type="entry name" value="UBA-like_sf"/>
</dbReference>
<dbReference type="NCBIfam" id="TIGR00116">
    <property type="entry name" value="tsf"/>
    <property type="match status" value="1"/>
</dbReference>
<dbReference type="PANTHER" id="PTHR11741">
    <property type="entry name" value="ELONGATION FACTOR TS"/>
    <property type="match status" value="1"/>
</dbReference>
<dbReference type="PANTHER" id="PTHR11741:SF0">
    <property type="entry name" value="ELONGATION FACTOR TS, MITOCHONDRIAL"/>
    <property type="match status" value="1"/>
</dbReference>
<dbReference type="Pfam" id="PF00889">
    <property type="entry name" value="EF_TS"/>
    <property type="match status" value="1"/>
</dbReference>
<dbReference type="SUPFAM" id="SSF54713">
    <property type="entry name" value="Elongation factor Ts (EF-Ts), dimerisation domain"/>
    <property type="match status" value="2"/>
</dbReference>
<dbReference type="SUPFAM" id="SSF46934">
    <property type="entry name" value="UBA-like"/>
    <property type="match status" value="1"/>
</dbReference>
<dbReference type="PROSITE" id="PS01127">
    <property type="entry name" value="EF_TS_2"/>
    <property type="match status" value="1"/>
</dbReference>
<feature type="chain" id="PRO_1000006158" description="Elongation factor Ts">
    <location>
        <begin position="1"/>
        <end position="292"/>
    </location>
</feature>
<feature type="region of interest" description="Involved in Mg(2+) ion dislocation from EF-Tu" evidence="1">
    <location>
        <begin position="80"/>
        <end position="83"/>
    </location>
</feature>
<protein>
    <recommendedName>
        <fullName evidence="1">Elongation factor Ts</fullName>
        <shortName evidence="1">EF-Ts</shortName>
    </recommendedName>
</protein>
<name>EFTS_CUPMC</name>
<evidence type="ECO:0000255" key="1">
    <source>
        <dbReference type="HAMAP-Rule" id="MF_00050"/>
    </source>
</evidence>
<sequence length="292" mass="30949">MAAITASMVAELRAKTDAPMMECKKALTEADGDLGKAEELLRVKLGNKASKAASRVTAEGIVVSYIDGTTGALVELNCETDFVSKNDDFLGFGAKVAELVAKQNPADVAVLSALEMDGSTVDAVRSALIGKIGENMTIRRFVRYTNGGKLVSYLHGTRIGVMVEFDGDEAAAKDVAMHVAAMKPVSLSADQVPAELIAKERSIAEQKAAESGKPAEIVAKMVEGSVQKYLKEVSLLNQSFVKNDKQTVEQMLKGVNTTVKGFTLYVVGEGIEKKQDDFAAEVAAQVAAAQKA</sequence>
<gene>
    <name evidence="1" type="primary">tsf</name>
    <name type="ordered locus">Rmet_1436</name>
</gene>
<proteinExistence type="inferred from homology"/>
<keyword id="KW-0963">Cytoplasm</keyword>
<keyword id="KW-0251">Elongation factor</keyword>
<keyword id="KW-0648">Protein biosynthesis</keyword>
<keyword id="KW-1185">Reference proteome</keyword>
<reference key="1">
    <citation type="journal article" date="2010" name="PLoS ONE">
        <title>The complete genome sequence of Cupriavidus metallidurans strain CH34, a master survivalist in harsh and anthropogenic environments.</title>
        <authorList>
            <person name="Janssen P.J."/>
            <person name="Van Houdt R."/>
            <person name="Moors H."/>
            <person name="Monsieurs P."/>
            <person name="Morin N."/>
            <person name="Michaux A."/>
            <person name="Benotmane M.A."/>
            <person name="Leys N."/>
            <person name="Vallaeys T."/>
            <person name="Lapidus A."/>
            <person name="Monchy S."/>
            <person name="Medigue C."/>
            <person name="Taghavi S."/>
            <person name="McCorkle S."/>
            <person name="Dunn J."/>
            <person name="van der Lelie D."/>
            <person name="Mergeay M."/>
        </authorList>
    </citation>
    <scope>NUCLEOTIDE SEQUENCE [LARGE SCALE GENOMIC DNA]</scope>
    <source>
        <strain>ATCC 43123 / DSM 2839 / NBRC 102507 / CH34</strain>
    </source>
</reference>
<accession>Q1LNF7</accession>